<dbReference type="EMBL" id="AL080118">
    <property type="protein sequence ID" value="CAB45717.2"/>
    <property type="molecule type" value="mRNA"/>
</dbReference>
<dbReference type="EMBL" id="AL110118">
    <property type="status" value="NOT_ANNOTATED_CDS"/>
    <property type="molecule type" value="Genomic_DNA"/>
</dbReference>
<dbReference type="EMBL" id="CH471061">
    <property type="protein sequence ID" value="EAW81518.1"/>
    <property type="molecule type" value="Genomic_DNA"/>
</dbReference>
<dbReference type="EMBL" id="BC030119">
    <property type="protein sequence ID" value="AAH30119.2"/>
    <property type="status" value="ALT_INIT"/>
    <property type="molecule type" value="mRNA"/>
</dbReference>
<dbReference type="EMBL" id="BM554490">
    <property type="status" value="NOT_ANNOTATED_CDS"/>
    <property type="molecule type" value="mRNA"/>
</dbReference>
<dbReference type="EMBL" id="CX785861">
    <property type="status" value="NOT_ANNOTATED_CDS"/>
    <property type="molecule type" value="mRNA"/>
</dbReference>
<dbReference type="CCDS" id="CCDS41980.1">
    <molecule id="Q8N6I4-2"/>
</dbReference>
<dbReference type="CCDS" id="CCDS45158.2">
    <molecule id="Q8N6I4-1"/>
</dbReference>
<dbReference type="PIR" id="T12454">
    <property type="entry name" value="T12454"/>
</dbReference>
<dbReference type="RefSeq" id="NP_001092091.2">
    <molecule id="Q8N6I4-1"/>
    <property type="nucleotide sequence ID" value="NM_001098621.4"/>
</dbReference>
<dbReference type="RefSeq" id="NP_056491.1">
    <molecule id="Q8N6I4-2"/>
    <property type="nucleotide sequence ID" value="NM_015676.3"/>
</dbReference>
<dbReference type="BioGRID" id="117597">
    <property type="interactions" value="3"/>
</dbReference>
<dbReference type="FunCoup" id="Q8N6I4">
    <property type="interactions" value="524"/>
</dbReference>
<dbReference type="IntAct" id="Q8N6I4">
    <property type="interactions" value="1"/>
</dbReference>
<dbReference type="STRING" id="9606.ENSP00000388431"/>
<dbReference type="TCDB" id="8.A.208.1.1">
    <property type="family name" value="the lysosomal enzyme trafficking factor (lyset) family"/>
</dbReference>
<dbReference type="SwissPalm" id="Q8N6I4"/>
<dbReference type="BioMuta" id="TMEM251"/>
<dbReference type="DMDM" id="221222535"/>
<dbReference type="MassIVE" id="Q8N6I4"/>
<dbReference type="PaxDb" id="9606-ENSP00000388431"/>
<dbReference type="PeptideAtlas" id="Q8N6I4"/>
<dbReference type="ProteomicsDB" id="72180">
    <molecule id="Q8N6I4-1"/>
</dbReference>
<dbReference type="ProteomicsDB" id="72181">
    <molecule id="Q8N6I4-2"/>
</dbReference>
<dbReference type="Antibodypedia" id="64066">
    <property type="antibodies" value="5 antibodies from 5 providers"/>
</dbReference>
<dbReference type="DNASU" id="26175"/>
<dbReference type="Ensembl" id="ENST00000283534.4">
    <molecule id="Q8N6I4-2"/>
    <property type="protein sequence ID" value="ENSP00000283534.4"/>
    <property type="gene ID" value="ENSG00000153485.6"/>
</dbReference>
<dbReference type="Ensembl" id="ENST00000415050.3">
    <molecule id="Q8N6I4-1"/>
    <property type="protein sequence ID" value="ENSP00000388431.3"/>
    <property type="gene ID" value="ENSG00000153485.6"/>
</dbReference>
<dbReference type="Ensembl" id="ENST00000622205.2">
    <molecule id="Q8N6I4-3"/>
    <property type="protein sequence ID" value="ENSP00000478917.1"/>
    <property type="gene ID" value="ENSG00000275947.2"/>
</dbReference>
<dbReference type="Ensembl" id="ENST00000626767.1">
    <molecule id="Q8N6I4-2"/>
    <property type="protein sequence ID" value="ENSP00000486678.1"/>
    <property type="gene ID" value="ENSG00000275947.2"/>
</dbReference>
<dbReference type="GeneID" id="26175"/>
<dbReference type="KEGG" id="hsa:26175"/>
<dbReference type="MANE-Select" id="ENST00000415050.3">
    <property type="protein sequence ID" value="ENSP00000388431.3"/>
    <property type="RefSeq nucleotide sequence ID" value="NM_001098621.4"/>
    <property type="RefSeq protein sequence ID" value="NP_001092091.2"/>
</dbReference>
<dbReference type="UCSC" id="uc001ybk.4">
    <molecule id="Q8N6I4-1"/>
    <property type="organism name" value="human"/>
</dbReference>
<dbReference type="AGR" id="HGNC:20218"/>
<dbReference type="CTD" id="26175"/>
<dbReference type="DisGeNET" id="26175"/>
<dbReference type="GeneCards" id="LYSET"/>
<dbReference type="HGNC" id="HGNC:20218">
    <property type="gene designation" value="LYSET"/>
</dbReference>
<dbReference type="HPA" id="ENSG00000153485">
    <property type="expression patterns" value="Low tissue specificity"/>
</dbReference>
<dbReference type="MalaCards" id="LYSET"/>
<dbReference type="MIM" id="619332">
    <property type="type" value="gene"/>
</dbReference>
<dbReference type="MIM" id="619345">
    <property type="type" value="phenotype"/>
</dbReference>
<dbReference type="neXtProt" id="NX_Q8N6I4"/>
<dbReference type="OpenTargets" id="ENSG00000153485"/>
<dbReference type="PharmGKB" id="PA134977710"/>
<dbReference type="VEuPathDB" id="HostDB:ENSG00000153485"/>
<dbReference type="eggNOG" id="ENOG502RY2J">
    <property type="taxonomic scope" value="Eukaryota"/>
</dbReference>
<dbReference type="GeneTree" id="ENSGT00390000007473"/>
<dbReference type="HOGENOM" id="CLU_133007_0_0_1"/>
<dbReference type="InParanoid" id="Q8N6I4"/>
<dbReference type="OMA" id="AYYIFEV"/>
<dbReference type="OrthoDB" id="6273523at2759"/>
<dbReference type="PAN-GO" id="Q8N6I4">
    <property type="GO annotations" value="0 GO annotations based on evolutionary models"/>
</dbReference>
<dbReference type="PhylomeDB" id="Q8N6I4"/>
<dbReference type="TreeFam" id="TF332722"/>
<dbReference type="PathwayCommons" id="Q8N6I4"/>
<dbReference type="BioGRID-ORCS" id="26175">
    <property type="hits" value="29 hits in 1166 CRISPR screens"/>
</dbReference>
<dbReference type="GenomeRNAi" id="26175"/>
<dbReference type="Pharos" id="Q8N6I4">
    <property type="development level" value="Tdark"/>
</dbReference>
<dbReference type="PRO" id="PR:Q8N6I4"/>
<dbReference type="Proteomes" id="UP000005640">
    <property type="component" value="Chromosome 14"/>
</dbReference>
<dbReference type="RNAct" id="Q8N6I4">
    <property type="molecule type" value="protein"/>
</dbReference>
<dbReference type="Bgee" id="ENSG00000153485">
    <property type="expression patterns" value="Expressed in islet of Langerhans and 101 other cell types or tissues"/>
</dbReference>
<dbReference type="GO" id="GO:0005794">
    <property type="term" value="C:Golgi apparatus"/>
    <property type="evidence" value="ECO:0000314"/>
    <property type="project" value="UniProtKB"/>
</dbReference>
<dbReference type="GO" id="GO:0031985">
    <property type="term" value="C:Golgi cisterna"/>
    <property type="evidence" value="ECO:0000314"/>
    <property type="project" value="UniProtKB"/>
</dbReference>
<dbReference type="GO" id="GO:0000139">
    <property type="term" value="C:Golgi membrane"/>
    <property type="evidence" value="ECO:0007669"/>
    <property type="project" value="UniProtKB-SubCell"/>
</dbReference>
<dbReference type="GO" id="GO:0007041">
    <property type="term" value="P:lysosomal transport"/>
    <property type="evidence" value="ECO:0000315"/>
    <property type="project" value="UniProtKB"/>
</dbReference>
<dbReference type="GO" id="GO:0007040">
    <property type="term" value="P:lysosome organization"/>
    <property type="evidence" value="ECO:0000315"/>
    <property type="project" value="UniProtKB"/>
</dbReference>
<dbReference type="GO" id="GO:0060627">
    <property type="term" value="P:regulation of vesicle-mediated transport"/>
    <property type="evidence" value="ECO:0000315"/>
    <property type="project" value="UniProtKB"/>
</dbReference>
<dbReference type="InterPro" id="IPR028024">
    <property type="entry name" value="LYSET"/>
</dbReference>
<dbReference type="PANTHER" id="PTHR31925:SF1">
    <property type="entry name" value="LYSOSOMAL ENZYME TRAFFICKING FACTOR"/>
    <property type="match status" value="1"/>
</dbReference>
<dbReference type="PANTHER" id="PTHR31925">
    <property type="entry name" value="TRANSMEMBRANE PROTEIN 251"/>
    <property type="match status" value="1"/>
</dbReference>
<dbReference type="Pfam" id="PF15190">
    <property type="entry name" value="TMEM251"/>
    <property type="match status" value="1"/>
</dbReference>
<feature type="chain" id="PRO_0000089916" description="Lysosomal enzyme trafficking factor">
    <location>
        <begin position="1"/>
        <end position="163"/>
    </location>
</feature>
<feature type="transmembrane region" description="Helical" evidence="1">
    <location>
        <begin position="40"/>
        <end position="60"/>
    </location>
</feature>
<feature type="transmembrane region" description="Helical" evidence="1">
    <location>
        <begin position="98"/>
        <end position="118"/>
    </location>
</feature>
<feature type="splice variant" id="VSP_036175" description="In isoform 2." evidence="6 7">
    <location>
        <begin position="1"/>
        <end position="32"/>
    </location>
</feature>
<feature type="splice variant" id="VSP_045689" description="In isoform 3." evidence="6">
    <original>M</original>
    <variation>MLAFSEM</variation>
    <location>
        <position position="1"/>
    </location>
</feature>
<feature type="sequence variant" id="VAR_085583" description="In DMAN; lower protein expression. Fails to rescue the lysosomal trafficking defect in LYSET-deficient cells. Severe reduction of interaction with GNPTAB." evidence="2 3 4">
    <original>R</original>
    <variation>W</variation>
    <location>
        <position position="39"/>
    </location>
</feature>
<feature type="sequence variant" id="VAR_087348" description="In DMAN; no protein expression. Fails to rescue the lysosomal trafficking defect in LYSET-deficient cells." evidence="2">
    <location>
        <begin position="66"/>
        <end position="163"/>
    </location>
</feature>
<feature type="mutagenesis site" description="Rescues the lysosomal trafficking defect in LYSET-deficient cells." evidence="3">
    <original>T</original>
    <variation>I</variation>
    <location>
        <position position="86"/>
    </location>
</feature>
<feature type="mutagenesis site" description="Rescues the lysosomal trafficking defect in LYSET-deficient cells." evidence="3">
    <original>I</original>
    <variation>V</variation>
    <location>
        <position position="136"/>
    </location>
</feature>
<feature type="mutagenesis site" description="Rescues the lysosomal trafficking defect in LYSET-deficient cells." evidence="3">
    <original>K</original>
    <variation>N</variation>
    <location>
        <position position="150"/>
    </location>
</feature>
<feature type="sequence conflict" description="In Ref. 4; BM554490." evidence="10" ref="4">
    <original>SN</original>
    <variation>FY</variation>
    <location>
        <begin position="152"/>
        <end position="153"/>
    </location>
</feature>
<organism>
    <name type="scientific">Homo sapiens</name>
    <name type="common">Human</name>
    <dbReference type="NCBI Taxonomy" id="9606"/>
    <lineage>
        <taxon>Eukaryota</taxon>
        <taxon>Metazoa</taxon>
        <taxon>Chordata</taxon>
        <taxon>Craniata</taxon>
        <taxon>Vertebrata</taxon>
        <taxon>Euteleostomi</taxon>
        <taxon>Mammalia</taxon>
        <taxon>Eutheria</taxon>
        <taxon>Euarchontoglires</taxon>
        <taxon>Primates</taxon>
        <taxon>Haplorrhini</taxon>
        <taxon>Catarrhini</taxon>
        <taxon>Hominidae</taxon>
        <taxon>Homo</taxon>
    </lineage>
</organism>
<keyword id="KW-0025">Alternative splicing</keyword>
<keyword id="KW-0225">Disease variant</keyword>
<keyword id="KW-0242">Dwarfism</keyword>
<keyword id="KW-0333">Golgi apparatus</keyword>
<keyword id="KW-0945">Host-virus interaction</keyword>
<keyword id="KW-0472">Membrane</keyword>
<keyword id="KW-1267">Proteomics identification</keyword>
<keyword id="KW-1185">Reference proteome</keyword>
<keyword id="KW-0812">Transmembrane</keyword>
<keyword id="KW-1133">Transmembrane helix</keyword>
<name>LYSET_HUMAN</name>
<gene>
    <name evidence="11" type="primary">LYSET</name>
    <name type="synonym">C14orf109</name>
    <name type="synonym">TMEM251</name>
</gene>
<reference key="1">
    <citation type="journal article" date="2007" name="BMC Genomics">
        <title>The full-ORF clone resource of the German cDNA consortium.</title>
        <authorList>
            <person name="Bechtel S."/>
            <person name="Rosenfelder H."/>
            <person name="Duda A."/>
            <person name="Schmidt C.P."/>
            <person name="Ernst U."/>
            <person name="Wellenreuther R."/>
            <person name="Mehrle A."/>
            <person name="Schuster C."/>
            <person name="Bahr A."/>
            <person name="Bloecker H."/>
            <person name="Heubner D."/>
            <person name="Hoerlein A."/>
            <person name="Michel G."/>
            <person name="Wedler H."/>
            <person name="Koehrer K."/>
            <person name="Ottenwaelder B."/>
            <person name="Poustka A."/>
            <person name="Wiemann S."/>
            <person name="Schupp I."/>
        </authorList>
    </citation>
    <scope>NUCLEOTIDE SEQUENCE [LARGE SCALE MRNA] (ISOFORM 2)</scope>
    <source>
        <tissue>Embryonic brain</tissue>
    </source>
</reference>
<reference key="2">
    <citation type="journal article" date="2003" name="Nature">
        <title>The DNA sequence and analysis of human chromosome 14.</title>
        <authorList>
            <person name="Heilig R."/>
            <person name="Eckenberg R."/>
            <person name="Petit J.-L."/>
            <person name="Fonknechten N."/>
            <person name="Da Silva C."/>
            <person name="Cattolico L."/>
            <person name="Levy M."/>
            <person name="Barbe V."/>
            <person name="De Berardinis V."/>
            <person name="Ureta-Vidal A."/>
            <person name="Pelletier E."/>
            <person name="Vico V."/>
            <person name="Anthouard V."/>
            <person name="Rowen L."/>
            <person name="Madan A."/>
            <person name="Qin S."/>
            <person name="Sun H."/>
            <person name="Du H."/>
            <person name="Pepin K."/>
            <person name="Artiguenave F."/>
            <person name="Robert C."/>
            <person name="Cruaud C."/>
            <person name="Bruels T."/>
            <person name="Jaillon O."/>
            <person name="Friedlander L."/>
            <person name="Samson G."/>
            <person name="Brottier P."/>
            <person name="Cure S."/>
            <person name="Segurens B."/>
            <person name="Aniere F."/>
            <person name="Samain S."/>
            <person name="Crespeau H."/>
            <person name="Abbasi N."/>
            <person name="Aiach N."/>
            <person name="Boscus D."/>
            <person name="Dickhoff R."/>
            <person name="Dors M."/>
            <person name="Dubois I."/>
            <person name="Friedman C."/>
            <person name="Gouyvenoux M."/>
            <person name="James R."/>
            <person name="Madan A."/>
            <person name="Mairey-Estrada B."/>
            <person name="Mangenot S."/>
            <person name="Martins N."/>
            <person name="Menard M."/>
            <person name="Oztas S."/>
            <person name="Ratcliffe A."/>
            <person name="Shaffer T."/>
            <person name="Trask B."/>
            <person name="Vacherie B."/>
            <person name="Bellemere C."/>
            <person name="Belser C."/>
            <person name="Besnard-Gonnet M."/>
            <person name="Bartol-Mavel D."/>
            <person name="Boutard M."/>
            <person name="Briez-Silla S."/>
            <person name="Combette S."/>
            <person name="Dufosse-Laurent V."/>
            <person name="Ferron C."/>
            <person name="Lechaplais C."/>
            <person name="Louesse C."/>
            <person name="Muselet D."/>
            <person name="Magdelenat G."/>
            <person name="Pateau E."/>
            <person name="Petit E."/>
            <person name="Sirvain-Trukniewicz P."/>
            <person name="Trybou A."/>
            <person name="Vega-Czarny N."/>
            <person name="Bataille E."/>
            <person name="Bluet E."/>
            <person name="Bordelais I."/>
            <person name="Dubois M."/>
            <person name="Dumont C."/>
            <person name="Guerin T."/>
            <person name="Haffray S."/>
            <person name="Hammadi R."/>
            <person name="Muanga J."/>
            <person name="Pellouin V."/>
            <person name="Robert D."/>
            <person name="Wunderle E."/>
            <person name="Gauguet G."/>
            <person name="Roy A."/>
            <person name="Sainte-Marthe L."/>
            <person name="Verdier J."/>
            <person name="Verdier-Discala C."/>
            <person name="Hillier L.W."/>
            <person name="Fulton L."/>
            <person name="McPherson J."/>
            <person name="Matsuda F."/>
            <person name="Wilson R."/>
            <person name="Scarpelli C."/>
            <person name="Gyapay G."/>
            <person name="Wincker P."/>
            <person name="Saurin W."/>
            <person name="Quetier F."/>
            <person name="Waterston R."/>
            <person name="Hood L."/>
            <person name="Weissenbach J."/>
        </authorList>
    </citation>
    <scope>NUCLEOTIDE SEQUENCE [LARGE SCALE GENOMIC DNA]</scope>
</reference>
<reference key="3">
    <citation type="submission" date="2005-07" db="EMBL/GenBank/DDBJ databases">
        <authorList>
            <person name="Mural R.J."/>
            <person name="Istrail S."/>
            <person name="Sutton G."/>
            <person name="Florea L."/>
            <person name="Halpern A.L."/>
            <person name="Mobarry C.M."/>
            <person name="Lippert R."/>
            <person name="Walenz B."/>
            <person name="Shatkay H."/>
            <person name="Dew I."/>
            <person name="Miller J.R."/>
            <person name="Flanigan M.J."/>
            <person name="Edwards N.J."/>
            <person name="Bolanos R."/>
            <person name="Fasulo D."/>
            <person name="Halldorsson B.V."/>
            <person name="Hannenhalli S."/>
            <person name="Turner R."/>
            <person name="Yooseph S."/>
            <person name="Lu F."/>
            <person name="Nusskern D.R."/>
            <person name="Shue B.C."/>
            <person name="Zheng X.H."/>
            <person name="Zhong F."/>
            <person name="Delcher A.L."/>
            <person name="Huson D.H."/>
            <person name="Kravitz S.A."/>
            <person name="Mouchard L."/>
            <person name="Reinert K."/>
            <person name="Remington K.A."/>
            <person name="Clark A.G."/>
            <person name="Waterman M.S."/>
            <person name="Eichler E.E."/>
            <person name="Adams M.D."/>
            <person name="Hunkapiller M.W."/>
            <person name="Myers E.W."/>
            <person name="Venter J.C."/>
        </authorList>
    </citation>
    <scope>NUCLEOTIDE SEQUENCE [LARGE SCALE GENOMIC DNA]</scope>
</reference>
<reference key="4">
    <citation type="journal article" date="2004" name="Genome Res.">
        <title>The status, quality, and expansion of the NIH full-length cDNA project: the Mammalian Gene Collection (MGC).</title>
        <authorList>
            <consortium name="The MGC Project Team"/>
        </authorList>
    </citation>
    <scope>NUCLEOTIDE SEQUENCE [LARGE SCALE MRNA] (ISOFORMS 2 AND 3)</scope>
    <scope>NUCLEOTIDE SEQUENCE [LARGE SCALE MRNA] OF 1-149 (ISOFORM 1)</scope>
    <source>
        <tissue>Brain</tissue>
        <tissue>Melanoma</tissue>
    </source>
</reference>
<reference key="5">
    <citation type="journal article" date="2021" name="Hum. Mutat.">
        <title>Biallelic TMEM251 variants in patients with severe skeletal dysplasia and extreme short stature.</title>
        <authorList>
            <person name="Ain N.U."/>
            <person name="Muhammad N."/>
            <person name="Dianatpour M."/>
            <person name="Baroncelli M."/>
            <person name="Iqbal M."/>
            <person name="Fard M.A.F."/>
            <person name="Bukhari I."/>
            <person name="Ahmed S."/>
            <person name="Hajipour M."/>
            <person name="Tabatabaie Z."/>
            <person name="Foroutan H."/>
            <person name="Nilsson O."/>
            <person name="Faghihi M.A."/>
            <person name="Makitie O."/>
            <person name="Naz S."/>
        </authorList>
    </citation>
    <scope>SUBCELLULAR LOCATION</scope>
    <scope>INVOLVEMENT IN DMAN</scope>
    <scope>VARIANTS DMAN TRP-39 AND 66-TYR--THR-163 DEL</scope>
</reference>
<reference key="6">
    <citation type="journal article" date="2022" name="Science">
        <title>Lysosomal enzyme trafficking factor LYSET enables nutritional usage of extracellular proteins.</title>
        <authorList>
            <person name="Pechincha C."/>
            <person name="Groessl S."/>
            <person name="Kalis R."/>
            <person name="de Almeida M."/>
            <person name="Zanotti A."/>
            <person name="Wittmann M."/>
            <person name="Schneider M."/>
            <person name="de Campos R.P."/>
            <person name="Rieser S."/>
            <person name="Brandstetter M."/>
            <person name="Schleiffer A."/>
            <person name="Mueller-Decker K."/>
            <person name="Helm D."/>
            <person name="Jabs S."/>
            <person name="Haselbach D."/>
            <person name="Lemberg M.K."/>
            <person name="Zuber J."/>
            <person name="Palm W."/>
        </authorList>
    </citation>
    <scope>FUNCTION</scope>
    <scope>INTERACTION WITH GNPTAB</scope>
    <scope>CHARACTERIZATION OF VARIANTS DMAN TRP-39 AND 66-TYR--THR-163 DEL</scope>
</reference>
<reference key="7">
    <citation type="journal article" date="2022" name="Science">
        <title>The human disease gene LYSET is essential for lysosomal enzyme transport and viral infection.</title>
        <authorList>
            <person name="Richards C.M."/>
            <person name="Jabs S."/>
            <person name="Qiao W."/>
            <person name="Varanese L.D."/>
            <person name="Schweizer M."/>
            <person name="Mosen P.R."/>
            <person name="Riley N.M."/>
            <person name="Kluessendorf M."/>
            <person name="Zengel J.R."/>
            <person name="Flynn R.A."/>
            <person name="Rustagi A."/>
            <person name="Widen J.C."/>
            <person name="Peters C.E."/>
            <person name="Ooi Y.S."/>
            <person name="Xie X."/>
            <person name="Shi P.Y."/>
            <person name="Bartenschlager R."/>
            <person name="Puschnik A.S."/>
            <person name="Bogyo M."/>
            <person name="Bertozzi C.R."/>
            <person name="Blish C.A."/>
            <person name="Winter D."/>
            <person name="Nagamine C.M."/>
            <person name="Braulke T."/>
            <person name="Carette J.E."/>
        </authorList>
    </citation>
    <scope>FUNCTION</scope>
    <scope>SUBCELLULAR LOCATION</scope>
    <scope>INTERACTION WITH GNPTAB</scope>
    <scope>CHARACTERIZATION OF VARIANT DMAN TRP-39</scope>
    <scope>MUTAGENESIS OF THR-86; ILE-136 AND LYS-150</scope>
    <scope>FUNCTION (MICROBIAL INFECTION)</scope>
</reference>
<reference key="8">
    <citation type="journal article" date="2022" name="Nat. Commun.">
        <title>GCAF(TMEM251) regulates lysosome biogenesis by activating the mannose-6-phosphate pathway.</title>
        <authorList>
            <person name="Zhang W."/>
            <person name="Yang X."/>
            <person name="Li Y."/>
            <person name="Yu L."/>
            <person name="Zhang B."/>
            <person name="Zhang J."/>
            <person name="Cho W.J."/>
            <person name="Venkatarangan V."/>
            <person name="Chen L."/>
            <person name="Burugula B.B."/>
            <person name="Bui S."/>
            <person name="Wang Y."/>
            <person name="Duan C."/>
            <person name="Kitzman J.O."/>
            <person name="Li M."/>
        </authorList>
    </citation>
    <scope>FUNCTION</scope>
    <scope>SUBCELLULAR LOCATION</scope>
    <scope>INTERACTION WITH GNPTAB AND MBTPS1</scope>
</reference>
<proteinExistence type="evidence at protein level"/>
<evidence type="ECO:0000255" key="1"/>
<evidence type="ECO:0000269" key="2">
    <source>
    </source>
</evidence>
<evidence type="ECO:0000269" key="3">
    <source>
    </source>
</evidence>
<evidence type="ECO:0000269" key="4">
    <source>
    </source>
</evidence>
<evidence type="ECO:0000269" key="5">
    <source>
    </source>
</evidence>
<evidence type="ECO:0000303" key="6">
    <source>
    </source>
</evidence>
<evidence type="ECO:0000303" key="7">
    <source>
    </source>
</evidence>
<evidence type="ECO:0000303" key="8">
    <source>
    </source>
</evidence>
<evidence type="ECO:0000303" key="9">
    <source>
    </source>
</evidence>
<evidence type="ECO:0000305" key="10"/>
<evidence type="ECO:0000312" key="11">
    <source>
        <dbReference type="HGNC" id="HGNC:20218"/>
    </source>
</evidence>
<sequence>MPKPPDYSELSDSLTLAVGTGRFSGPLHRAWRMMNFRQRMGWIGVGLYLLASAAAFYYVFEISETYNRLALEHIQQHPEEPLEGTTWTHSLKAQLLSLPFWVWTVIFLVPYLQMFLFLYSCTRADPKTVGYCIIPICLAVICNRHQAFVKASNQISRLQLIDT</sequence>
<comment type="function">
    <text evidence="3 4 5">Required for mannose-6-phosphate-dependent trafficking of lysosomal enzymes (PubMed:36074821, PubMed:36074822, PubMed:36096887). LYSET bridges GlcNAc-1-phosphate transferase (GNPTAB), to the membrane-bound transcription factor site-1 protease (MBTPS1), thus allowing proteolytic activation of the GNPTAB. GNPTAB is involved in the regulation of M6P-dependent Golgi-to-lysosome trafficking of lysosomal enzymes (PubMed:36074821, PubMed:36074822, PubMed:36096887). LYSET is thus an essential factor for maturation and delivery of lysosomal hydrolases (PubMed:36074822).</text>
</comment>
<comment type="function">
    <text evidence="3">(Microbial infection) Essential for infection by muliple viruses, including SARS-CoV-2, that utilize activated cathepsins for entry after M6P-dependent lysosomal transport.</text>
</comment>
<comment type="subunit">
    <text evidence="3 5">Interacts with GNPTAB; this interaction is important for proper localization of GNPTAB in Golgi stacks (PubMed:36074821, PubMed:36096887). Interacts with MBTPS1 (PubMed:36096887).</text>
</comment>
<comment type="subcellular location">
    <subcellularLocation>
        <location evidence="2 3 5">Golgi apparatus membrane</location>
        <topology evidence="1">Multi-pass membrane protein</topology>
    </subcellularLocation>
    <text evidence="3">Colocalizes with GNPTAB and GNPTG in Golgi apparatus cisternae.</text>
</comment>
<comment type="alternative products">
    <event type="alternative splicing"/>
    <isoform>
        <id>Q8N6I4-1</id>
        <name>1</name>
        <sequence type="displayed"/>
    </isoform>
    <isoform>
        <id>Q8N6I4-2</id>
        <name>2</name>
        <sequence type="described" ref="VSP_036175"/>
    </isoform>
    <isoform>
        <id>Q8N6I4-3</id>
        <name>3</name>
        <sequence type="described" ref="VSP_045689"/>
    </isoform>
</comment>
<comment type="disease" evidence="2 3 4">
    <disease id="DI-06118">
        <name>Dysostosis multiplex, Ain-Naz type</name>
        <acronym>DMAN</acronym>
        <description>An autosomal recessive, severe skeletal disease characterized by features of dysostosis multiplex, severe short stature, coarse facies with broad nose and prominent lips, protruding abdomens, and progressive skeletal changes causing gradual mobility loss. Death in childhood or early adulthood may occur.</description>
        <dbReference type="MIM" id="619345"/>
    </disease>
    <text>The disease is caused by variants affecting the gene represented in this entry.</text>
</comment>
<comment type="similarity">
    <text evidence="10">Belongs to the LYSET family.</text>
</comment>
<comment type="sequence caution" evidence="10">
    <conflict type="erroneous initiation">
        <sequence resource="EMBL-CDS" id="AAH30119"/>
    </conflict>
    <text>Extended N-terminus.</text>
</comment>
<accession>Q8N6I4</accession>
<accession>J3KQ65</accession>
<accession>Q9Y4S5</accession>
<protein>
    <recommendedName>
        <fullName evidence="8">Lysosomal enzyme trafficking factor</fullName>
    </recommendedName>
    <alternativeName>
        <fullName evidence="9">GNPTAB cleavage and activity factor</fullName>
        <shortName evidence="9">GCAF</shortName>
    </alternativeName>
    <alternativeName>
        <fullName>Transmembrane protein 251</fullName>
    </alternativeName>
</protein>